<feature type="chain" id="PRO_0000114679" description="Putative inner dynein arm light chain, axonemal">
    <location>
        <begin position="1"/>
        <end position="250"/>
    </location>
</feature>
<feature type="coiled-coil region" evidence="4">
    <location>
        <begin position="168"/>
        <end position="250"/>
    </location>
</feature>
<organism>
    <name type="scientific">Drosophila melanogaster</name>
    <name type="common">Fruit fly</name>
    <dbReference type="NCBI Taxonomy" id="7227"/>
    <lineage>
        <taxon>Eukaryota</taxon>
        <taxon>Metazoa</taxon>
        <taxon>Ecdysozoa</taxon>
        <taxon>Arthropoda</taxon>
        <taxon>Hexapoda</taxon>
        <taxon>Insecta</taxon>
        <taxon>Pterygota</taxon>
        <taxon>Neoptera</taxon>
        <taxon>Endopterygota</taxon>
        <taxon>Diptera</taxon>
        <taxon>Brachycera</taxon>
        <taxon>Muscomorpha</taxon>
        <taxon>Ephydroidea</taxon>
        <taxon>Drosophilidae</taxon>
        <taxon>Drosophila</taxon>
        <taxon>Sophophora</taxon>
    </lineage>
</organism>
<evidence type="ECO:0000250" key="1"/>
<evidence type="ECO:0000250" key="2">
    <source>
        <dbReference type="UniProtKB" id="O14645"/>
    </source>
</evidence>
<evidence type="ECO:0000250" key="3">
    <source>
        <dbReference type="UniProtKB" id="Q6GN86"/>
    </source>
</evidence>
<evidence type="ECO:0000255" key="4"/>
<evidence type="ECO:0000305" key="5"/>
<evidence type="ECO:0000312" key="6">
    <source>
        <dbReference type="FlyBase" id="FBgn0037962"/>
    </source>
</evidence>
<accession>Q9VGG6</accession>
<accession>A0AMZ0</accession>
<comment type="function">
    <text evidence="1">May play a dynamic role in flagellar motility.</text>
</comment>
<comment type="subcellular location">
    <subcellularLocation>
        <location evidence="2">Cell projection</location>
        <location evidence="2">Cilium</location>
    </subcellularLocation>
    <subcellularLocation>
        <location evidence="3">Dynein axonemal particle</location>
    </subcellularLocation>
</comment>
<comment type="similarity">
    <text evidence="5">Belongs to the inner dynein arm light chain family.</text>
</comment>
<keyword id="KW-0966">Cell projection</keyword>
<keyword id="KW-0175">Coiled coil</keyword>
<keyword id="KW-0963">Cytoplasm</keyword>
<keyword id="KW-0243">Dynein</keyword>
<keyword id="KW-0505">Motor protein</keyword>
<keyword id="KW-1185">Reference proteome</keyword>
<sequence length="250" mass="28797">MEELDITSVGQFQTLVRYNNPVLVVKHPDKKGGAPLTEIEMKRPQTAGALLDTKRETEEILNSILPPRCWEEDGQLWQQSVSSTPATRQDVINLQEMLDTRLQQTQARETGICPVRRELYSQCFDEIIRQVTINCSERGLLLLRIRDEIAMSMEAYETLYCSSVAFGMRKALQAHEEKEMLRDRVKTLELDKEALEEIIADMKLKQEQAERRNAELRASEEKKFTEEITFLKKTNAQLKAQLEGITAPKK</sequence>
<protein>
    <recommendedName>
        <fullName evidence="5">Putative inner dynein arm light chain, axonemal</fullName>
    </recommendedName>
</protein>
<proteinExistence type="evidence at transcript level"/>
<gene>
    <name evidence="6" type="primary">Dnali1</name>
    <name evidence="6" type="ORF">CG6971</name>
</gene>
<name>IDLC_DROME</name>
<dbReference type="EMBL" id="AM294028">
    <property type="protein sequence ID" value="CAL25932.1"/>
    <property type="molecule type" value="Genomic_DNA"/>
</dbReference>
<dbReference type="EMBL" id="AM294029">
    <property type="protein sequence ID" value="CAL25933.1"/>
    <property type="molecule type" value="Genomic_DNA"/>
</dbReference>
<dbReference type="EMBL" id="AM294030">
    <property type="protein sequence ID" value="CAL25934.1"/>
    <property type="molecule type" value="Genomic_DNA"/>
</dbReference>
<dbReference type="EMBL" id="AM294031">
    <property type="protein sequence ID" value="CAL25935.1"/>
    <property type="molecule type" value="Genomic_DNA"/>
</dbReference>
<dbReference type="EMBL" id="AM294032">
    <property type="protein sequence ID" value="CAL25936.1"/>
    <property type="molecule type" value="Genomic_DNA"/>
</dbReference>
<dbReference type="EMBL" id="AM294033">
    <property type="protein sequence ID" value="CAL25937.1"/>
    <property type="molecule type" value="Genomic_DNA"/>
</dbReference>
<dbReference type="EMBL" id="AM294034">
    <property type="protein sequence ID" value="CAL25938.1"/>
    <property type="molecule type" value="Genomic_DNA"/>
</dbReference>
<dbReference type="EMBL" id="AM294035">
    <property type="protein sequence ID" value="CAL25939.1"/>
    <property type="molecule type" value="Genomic_DNA"/>
</dbReference>
<dbReference type="EMBL" id="AM294036">
    <property type="protein sequence ID" value="CAL25940.1"/>
    <property type="molecule type" value="Genomic_DNA"/>
</dbReference>
<dbReference type="EMBL" id="AM294037">
    <property type="protein sequence ID" value="CAL25941.1"/>
    <property type="molecule type" value="Genomic_DNA"/>
</dbReference>
<dbReference type="EMBL" id="AM294038">
    <property type="protein sequence ID" value="CAL25942.1"/>
    <property type="molecule type" value="Genomic_DNA"/>
</dbReference>
<dbReference type="EMBL" id="AE014297">
    <property type="protein sequence ID" value="AAF54716.1"/>
    <property type="molecule type" value="Genomic_DNA"/>
</dbReference>
<dbReference type="EMBL" id="AY069202">
    <property type="protein sequence ID" value="AAL39347.1"/>
    <property type="molecule type" value="mRNA"/>
</dbReference>
<dbReference type="RefSeq" id="NP_650128.1">
    <property type="nucleotide sequence ID" value="NM_141871.3"/>
</dbReference>
<dbReference type="SMR" id="Q9VGG6"/>
<dbReference type="FunCoup" id="Q9VGG6">
    <property type="interactions" value="71"/>
</dbReference>
<dbReference type="IntAct" id="Q9VGG6">
    <property type="interactions" value="6"/>
</dbReference>
<dbReference type="STRING" id="7227.FBpp0081988"/>
<dbReference type="GlyGen" id="Q9VGG6">
    <property type="glycosylation" value="1 site"/>
</dbReference>
<dbReference type="PaxDb" id="7227-FBpp0081988"/>
<dbReference type="DNASU" id="41440"/>
<dbReference type="EnsemblMetazoa" id="FBtr0082514">
    <property type="protein sequence ID" value="FBpp0081988"/>
    <property type="gene ID" value="FBgn0037962"/>
</dbReference>
<dbReference type="GeneID" id="41440"/>
<dbReference type="KEGG" id="dme:Dmel_CG6971"/>
<dbReference type="UCSC" id="CG6971-RA">
    <property type="organism name" value="d. melanogaster"/>
</dbReference>
<dbReference type="AGR" id="FB:FBgn0037962"/>
<dbReference type="CTD" id="7802"/>
<dbReference type="FlyBase" id="FBgn0037962">
    <property type="gene designation" value="Dnali1"/>
</dbReference>
<dbReference type="VEuPathDB" id="VectorBase:FBgn0037962"/>
<dbReference type="eggNOG" id="KOG4001">
    <property type="taxonomic scope" value="Eukaryota"/>
</dbReference>
<dbReference type="GeneTree" id="ENSGT00390000003012"/>
<dbReference type="HOGENOM" id="CLU_072652_0_0_1"/>
<dbReference type="InParanoid" id="Q9VGG6"/>
<dbReference type="OMA" id="QVTIICA"/>
<dbReference type="OrthoDB" id="273640at2759"/>
<dbReference type="PhylomeDB" id="Q9VGG6"/>
<dbReference type="BioGRID-ORCS" id="41440">
    <property type="hits" value="0 hits in 1 CRISPR screen"/>
</dbReference>
<dbReference type="GenomeRNAi" id="41440"/>
<dbReference type="PRO" id="PR:Q9VGG6"/>
<dbReference type="Proteomes" id="UP000000803">
    <property type="component" value="Chromosome 3R"/>
</dbReference>
<dbReference type="Bgee" id="FBgn0037962">
    <property type="expression patterns" value="Expressed in early elongation stage spermatid (Drosophila) in testis and 21 other cell types or tissues"/>
</dbReference>
<dbReference type="ExpressionAtlas" id="Q9VGG6">
    <property type="expression patterns" value="baseline and differential"/>
</dbReference>
<dbReference type="GO" id="GO:0005930">
    <property type="term" value="C:axoneme"/>
    <property type="evidence" value="ECO:0000318"/>
    <property type="project" value="GO_Central"/>
</dbReference>
<dbReference type="GO" id="GO:0097546">
    <property type="term" value="C:ciliary base"/>
    <property type="evidence" value="ECO:0000318"/>
    <property type="project" value="GO_Central"/>
</dbReference>
<dbReference type="GO" id="GO:0120293">
    <property type="term" value="C:dynein axonemal particle"/>
    <property type="evidence" value="ECO:0000250"/>
    <property type="project" value="UniProtKB"/>
</dbReference>
<dbReference type="GO" id="GO:0036156">
    <property type="term" value="C:inner dynein arm"/>
    <property type="evidence" value="ECO:0000250"/>
    <property type="project" value="FlyBase"/>
</dbReference>
<dbReference type="GO" id="GO:0045504">
    <property type="term" value="F:dynein heavy chain binding"/>
    <property type="evidence" value="ECO:0000250"/>
    <property type="project" value="FlyBase"/>
</dbReference>
<dbReference type="GO" id="GO:0003341">
    <property type="term" value="P:cilium movement"/>
    <property type="evidence" value="ECO:0000250"/>
    <property type="project" value="FlyBase"/>
</dbReference>
<dbReference type="GO" id="GO:0036159">
    <property type="term" value="P:inner dynein arm assembly"/>
    <property type="evidence" value="ECO:0000250"/>
    <property type="project" value="FlyBase"/>
</dbReference>
<dbReference type="InterPro" id="IPR019347">
    <property type="entry name" value="Axonemal_dynein_light_chain"/>
</dbReference>
<dbReference type="PANTHER" id="PTHR13183:SF0">
    <property type="entry name" value="AXONEMAL DYNEIN LIGHT INTERMEDIATE POLYPEPTIDE 1"/>
    <property type="match status" value="1"/>
</dbReference>
<dbReference type="PANTHER" id="PTHR13183">
    <property type="entry name" value="AXONEMAL INNER ARM DYNEIN LIGHT CHAIN 28"/>
    <property type="match status" value="1"/>
</dbReference>
<dbReference type="Pfam" id="PF10211">
    <property type="entry name" value="Ax_dynein_light"/>
    <property type="match status" value="1"/>
</dbReference>
<reference key="1">
    <citation type="journal article" date="2006" name="Genetics">
        <title>Widespread adaptive evolution of Drosophila genes with sex-biased expression.</title>
        <authorList>
            <person name="Proeschel M."/>
            <person name="Zhang Z."/>
            <person name="Parsch J."/>
        </authorList>
    </citation>
    <scope>NUCLEOTIDE SEQUENCE [GENOMIC DNA]</scope>
    <source>
        <strain>ZBMEL131</strain>
        <strain>ZBMEL145</strain>
        <strain>ZBMEL157</strain>
        <strain>ZBMEL186</strain>
        <strain>ZBMEL191</strain>
        <strain>ZBMEL377</strain>
        <strain>ZBMEL384</strain>
        <strain>ZBMEL398</strain>
        <strain>ZBMEL82</strain>
        <strain>ZBMEL84</strain>
        <strain>ZBMEL95</strain>
    </source>
</reference>
<reference key="2">
    <citation type="journal article" date="2000" name="Science">
        <title>The genome sequence of Drosophila melanogaster.</title>
        <authorList>
            <person name="Adams M.D."/>
            <person name="Celniker S.E."/>
            <person name="Holt R.A."/>
            <person name="Evans C.A."/>
            <person name="Gocayne J.D."/>
            <person name="Amanatides P.G."/>
            <person name="Scherer S.E."/>
            <person name="Li P.W."/>
            <person name="Hoskins R.A."/>
            <person name="Galle R.F."/>
            <person name="George R.A."/>
            <person name="Lewis S.E."/>
            <person name="Richards S."/>
            <person name="Ashburner M."/>
            <person name="Henderson S.N."/>
            <person name="Sutton G.G."/>
            <person name="Wortman J.R."/>
            <person name="Yandell M.D."/>
            <person name="Zhang Q."/>
            <person name="Chen L.X."/>
            <person name="Brandon R.C."/>
            <person name="Rogers Y.-H.C."/>
            <person name="Blazej R.G."/>
            <person name="Champe M."/>
            <person name="Pfeiffer B.D."/>
            <person name="Wan K.H."/>
            <person name="Doyle C."/>
            <person name="Baxter E.G."/>
            <person name="Helt G."/>
            <person name="Nelson C.R."/>
            <person name="Miklos G.L.G."/>
            <person name="Abril J.F."/>
            <person name="Agbayani A."/>
            <person name="An H.-J."/>
            <person name="Andrews-Pfannkoch C."/>
            <person name="Baldwin D."/>
            <person name="Ballew R.M."/>
            <person name="Basu A."/>
            <person name="Baxendale J."/>
            <person name="Bayraktaroglu L."/>
            <person name="Beasley E.M."/>
            <person name="Beeson K.Y."/>
            <person name="Benos P.V."/>
            <person name="Berman B.P."/>
            <person name="Bhandari D."/>
            <person name="Bolshakov S."/>
            <person name="Borkova D."/>
            <person name="Botchan M.R."/>
            <person name="Bouck J."/>
            <person name="Brokstein P."/>
            <person name="Brottier P."/>
            <person name="Burtis K.C."/>
            <person name="Busam D.A."/>
            <person name="Butler H."/>
            <person name="Cadieu E."/>
            <person name="Center A."/>
            <person name="Chandra I."/>
            <person name="Cherry J.M."/>
            <person name="Cawley S."/>
            <person name="Dahlke C."/>
            <person name="Davenport L.B."/>
            <person name="Davies P."/>
            <person name="de Pablos B."/>
            <person name="Delcher A."/>
            <person name="Deng Z."/>
            <person name="Mays A.D."/>
            <person name="Dew I."/>
            <person name="Dietz S.M."/>
            <person name="Dodson K."/>
            <person name="Doup L.E."/>
            <person name="Downes M."/>
            <person name="Dugan-Rocha S."/>
            <person name="Dunkov B.C."/>
            <person name="Dunn P."/>
            <person name="Durbin K.J."/>
            <person name="Evangelista C.C."/>
            <person name="Ferraz C."/>
            <person name="Ferriera S."/>
            <person name="Fleischmann W."/>
            <person name="Fosler C."/>
            <person name="Gabrielian A.E."/>
            <person name="Garg N.S."/>
            <person name="Gelbart W.M."/>
            <person name="Glasser K."/>
            <person name="Glodek A."/>
            <person name="Gong F."/>
            <person name="Gorrell J.H."/>
            <person name="Gu Z."/>
            <person name="Guan P."/>
            <person name="Harris M."/>
            <person name="Harris N.L."/>
            <person name="Harvey D.A."/>
            <person name="Heiman T.J."/>
            <person name="Hernandez J.R."/>
            <person name="Houck J."/>
            <person name="Hostin D."/>
            <person name="Houston K.A."/>
            <person name="Howland T.J."/>
            <person name="Wei M.-H."/>
            <person name="Ibegwam C."/>
            <person name="Jalali M."/>
            <person name="Kalush F."/>
            <person name="Karpen G.H."/>
            <person name="Ke Z."/>
            <person name="Kennison J.A."/>
            <person name="Ketchum K.A."/>
            <person name="Kimmel B.E."/>
            <person name="Kodira C.D."/>
            <person name="Kraft C.L."/>
            <person name="Kravitz S."/>
            <person name="Kulp D."/>
            <person name="Lai Z."/>
            <person name="Lasko P."/>
            <person name="Lei Y."/>
            <person name="Levitsky A.A."/>
            <person name="Li J.H."/>
            <person name="Li Z."/>
            <person name="Liang Y."/>
            <person name="Lin X."/>
            <person name="Liu X."/>
            <person name="Mattei B."/>
            <person name="McIntosh T.C."/>
            <person name="McLeod M.P."/>
            <person name="McPherson D."/>
            <person name="Merkulov G."/>
            <person name="Milshina N.V."/>
            <person name="Mobarry C."/>
            <person name="Morris J."/>
            <person name="Moshrefi A."/>
            <person name="Mount S.M."/>
            <person name="Moy M."/>
            <person name="Murphy B."/>
            <person name="Murphy L."/>
            <person name="Muzny D.M."/>
            <person name="Nelson D.L."/>
            <person name="Nelson D.R."/>
            <person name="Nelson K.A."/>
            <person name="Nixon K."/>
            <person name="Nusskern D.R."/>
            <person name="Pacleb J.M."/>
            <person name="Palazzolo M."/>
            <person name="Pittman G.S."/>
            <person name="Pan S."/>
            <person name="Pollard J."/>
            <person name="Puri V."/>
            <person name="Reese M.G."/>
            <person name="Reinert K."/>
            <person name="Remington K."/>
            <person name="Saunders R.D.C."/>
            <person name="Scheeler F."/>
            <person name="Shen H."/>
            <person name="Shue B.C."/>
            <person name="Siden-Kiamos I."/>
            <person name="Simpson M."/>
            <person name="Skupski M.P."/>
            <person name="Smith T.J."/>
            <person name="Spier E."/>
            <person name="Spradling A.C."/>
            <person name="Stapleton M."/>
            <person name="Strong R."/>
            <person name="Sun E."/>
            <person name="Svirskas R."/>
            <person name="Tector C."/>
            <person name="Turner R."/>
            <person name="Venter E."/>
            <person name="Wang A.H."/>
            <person name="Wang X."/>
            <person name="Wang Z.-Y."/>
            <person name="Wassarman D.A."/>
            <person name="Weinstock G.M."/>
            <person name="Weissenbach J."/>
            <person name="Williams S.M."/>
            <person name="Woodage T."/>
            <person name="Worley K.C."/>
            <person name="Wu D."/>
            <person name="Yang S."/>
            <person name="Yao Q.A."/>
            <person name="Ye J."/>
            <person name="Yeh R.-F."/>
            <person name="Zaveri J.S."/>
            <person name="Zhan M."/>
            <person name="Zhang G."/>
            <person name="Zhao Q."/>
            <person name="Zheng L."/>
            <person name="Zheng X.H."/>
            <person name="Zhong F.N."/>
            <person name="Zhong W."/>
            <person name="Zhou X."/>
            <person name="Zhu S.C."/>
            <person name="Zhu X."/>
            <person name="Smith H.O."/>
            <person name="Gibbs R.A."/>
            <person name="Myers E.W."/>
            <person name="Rubin G.M."/>
            <person name="Venter J.C."/>
        </authorList>
    </citation>
    <scope>NUCLEOTIDE SEQUENCE [LARGE SCALE GENOMIC DNA]</scope>
    <source>
        <strain>Berkeley</strain>
    </source>
</reference>
<reference key="3">
    <citation type="journal article" date="2002" name="Genome Biol.">
        <title>Annotation of the Drosophila melanogaster euchromatic genome: a systematic review.</title>
        <authorList>
            <person name="Misra S."/>
            <person name="Crosby M.A."/>
            <person name="Mungall C.J."/>
            <person name="Matthews B.B."/>
            <person name="Campbell K.S."/>
            <person name="Hradecky P."/>
            <person name="Huang Y."/>
            <person name="Kaminker J.S."/>
            <person name="Millburn G.H."/>
            <person name="Prochnik S.E."/>
            <person name="Smith C.D."/>
            <person name="Tupy J.L."/>
            <person name="Whitfield E.J."/>
            <person name="Bayraktaroglu L."/>
            <person name="Berman B.P."/>
            <person name="Bettencourt B.R."/>
            <person name="Celniker S.E."/>
            <person name="de Grey A.D.N.J."/>
            <person name="Drysdale R.A."/>
            <person name="Harris N.L."/>
            <person name="Richter J."/>
            <person name="Russo S."/>
            <person name="Schroeder A.J."/>
            <person name="Shu S.Q."/>
            <person name="Stapleton M."/>
            <person name="Yamada C."/>
            <person name="Ashburner M."/>
            <person name="Gelbart W.M."/>
            <person name="Rubin G.M."/>
            <person name="Lewis S.E."/>
        </authorList>
    </citation>
    <scope>GENOME REANNOTATION</scope>
    <source>
        <strain>Berkeley</strain>
    </source>
</reference>
<reference key="4">
    <citation type="journal article" date="2002" name="Genome Biol.">
        <title>A Drosophila full-length cDNA resource.</title>
        <authorList>
            <person name="Stapleton M."/>
            <person name="Carlson J.W."/>
            <person name="Brokstein P."/>
            <person name="Yu C."/>
            <person name="Champe M."/>
            <person name="George R.A."/>
            <person name="Guarin H."/>
            <person name="Kronmiller B."/>
            <person name="Pacleb J.M."/>
            <person name="Park S."/>
            <person name="Wan K.H."/>
            <person name="Rubin G.M."/>
            <person name="Celniker S.E."/>
        </authorList>
    </citation>
    <scope>NUCLEOTIDE SEQUENCE [LARGE SCALE MRNA]</scope>
    <source>
        <strain>Berkeley</strain>
        <tissue>Head</tissue>
    </source>
</reference>